<gene>
    <name type="ordered locus">BamMC406_5393</name>
</gene>
<dbReference type="EC" id="3.-.-.-"/>
<dbReference type="EMBL" id="CP001026">
    <property type="protein sequence ID" value="ACB67837.1"/>
    <property type="molecule type" value="Genomic_DNA"/>
</dbReference>
<dbReference type="RefSeq" id="WP_012367054.1">
    <property type="nucleotide sequence ID" value="NC_010552.1"/>
</dbReference>
<dbReference type="SMR" id="B1Z1Y2"/>
<dbReference type="KEGG" id="bac:BamMC406_5393"/>
<dbReference type="HOGENOM" id="CLU_028458_3_4_4"/>
<dbReference type="OrthoDB" id="9805307at2"/>
<dbReference type="Proteomes" id="UP000001680">
    <property type="component" value="Chromosome 2"/>
</dbReference>
<dbReference type="GO" id="GO:0016787">
    <property type="term" value="F:hydrolase activity"/>
    <property type="evidence" value="ECO:0007669"/>
    <property type="project" value="UniProtKB-KW"/>
</dbReference>
<dbReference type="GO" id="GO:0046872">
    <property type="term" value="F:metal ion binding"/>
    <property type="evidence" value="ECO:0007669"/>
    <property type="project" value="UniProtKB-KW"/>
</dbReference>
<dbReference type="GO" id="GO:0050385">
    <property type="term" value="F:ureidoglycolate lyase activity"/>
    <property type="evidence" value="ECO:0007669"/>
    <property type="project" value="UniProtKB-EC"/>
</dbReference>
<dbReference type="GO" id="GO:0019628">
    <property type="term" value="P:urate catabolic process"/>
    <property type="evidence" value="ECO:0007669"/>
    <property type="project" value="UniProtKB-UniPathway"/>
</dbReference>
<dbReference type="FunFam" id="3.90.850.10:FF:000002">
    <property type="entry name" value="2-hydroxyhepta-2,4-diene-1,7-dioate isomerase"/>
    <property type="match status" value="1"/>
</dbReference>
<dbReference type="Gene3D" id="3.90.850.10">
    <property type="entry name" value="Fumarylacetoacetase-like, C-terminal domain"/>
    <property type="match status" value="1"/>
</dbReference>
<dbReference type="InterPro" id="IPR051121">
    <property type="entry name" value="FAH"/>
</dbReference>
<dbReference type="InterPro" id="IPR011234">
    <property type="entry name" value="Fumarylacetoacetase-like_C"/>
</dbReference>
<dbReference type="InterPro" id="IPR036663">
    <property type="entry name" value="Fumarylacetoacetase_C_sf"/>
</dbReference>
<dbReference type="PANTHER" id="PTHR42796:SF4">
    <property type="entry name" value="FUMARYLACETOACETATE HYDROLASE DOMAIN-CONTAINING PROTEIN 2A"/>
    <property type="match status" value="1"/>
</dbReference>
<dbReference type="PANTHER" id="PTHR42796">
    <property type="entry name" value="FUMARYLACETOACETATE HYDROLASE DOMAIN-CONTAINING PROTEIN 2A-RELATED"/>
    <property type="match status" value="1"/>
</dbReference>
<dbReference type="Pfam" id="PF01557">
    <property type="entry name" value="FAA_hydrolase"/>
    <property type="match status" value="1"/>
</dbReference>
<dbReference type="SUPFAM" id="SSF56529">
    <property type="entry name" value="FAH"/>
    <property type="match status" value="1"/>
</dbReference>
<comment type="cofactor">
    <cofactor evidence="1">
        <name>Mg(2+)</name>
        <dbReference type="ChEBI" id="CHEBI:18420"/>
    </cofactor>
</comment>
<comment type="similarity">
    <text evidence="2">Belongs to the FAH family.</text>
</comment>
<keyword id="KW-0378">Hydrolase</keyword>
<keyword id="KW-0460">Magnesium</keyword>
<keyword id="KW-0479">Metal-binding</keyword>
<name>UGL_BURA4</name>
<feature type="chain" id="PRO_0000371513" description="Putative hydrolase BamMC406_5393">
    <location>
        <begin position="1"/>
        <end position="282"/>
    </location>
</feature>
<feature type="binding site" evidence="1">
    <location>
        <position position="124"/>
    </location>
    <ligand>
        <name>Mg(2+)</name>
        <dbReference type="ChEBI" id="CHEBI:18420"/>
    </ligand>
</feature>
<feature type="binding site" evidence="1">
    <location>
        <position position="126"/>
    </location>
    <ligand>
        <name>Mg(2+)</name>
        <dbReference type="ChEBI" id="CHEBI:18420"/>
    </ligand>
</feature>
<feature type="binding site" evidence="1">
    <location>
        <position position="155"/>
    </location>
    <ligand>
        <name>Mg(2+)</name>
        <dbReference type="ChEBI" id="CHEBI:18420"/>
    </ligand>
</feature>
<proteinExistence type="inferred from homology"/>
<sequence>MKLLRYGPSGQEKPGILDADGRIRDLSAHVPDLAGDVLSDAALARLRAIDPATLPLVSGEPRIGACVGRVGKFIGIGLNYADHAAEAGMPVPKEPVVFGKWTSSICGPNDGIDIPKGSVKTDWEVELGVVIGTTCKDVDEARALDYVAGYCVVNDVSEREWQIERGGQWDKGKGFDTFGPIGPWLVTRDEVPDPQRVDLWLEIDGHRYQNGNTRTMVFTVAQLVAYLSTCMTLQPGDVITTGTPPGVGMGIKPSPVFLKAGQTVRLGIDGLGEQLQSTRNAQ</sequence>
<reference key="1">
    <citation type="submission" date="2008-04" db="EMBL/GenBank/DDBJ databases">
        <title>Complete sequence of chromosome 2 of Burkholderia ambifaria MC40-6.</title>
        <authorList>
            <person name="Copeland A."/>
            <person name="Lucas S."/>
            <person name="Lapidus A."/>
            <person name="Glavina del Rio T."/>
            <person name="Dalin E."/>
            <person name="Tice H."/>
            <person name="Pitluck S."/>
            <person name="Chain P."/>
            <person name="Malfatti S."/>
            <person name="Shin M."/>
            <person name="Vergez L."/>
            <person name="Lang D."/>
            <person name="Schmutz J."/>
            <person name="Larimer F."/>
            <person name="Land M."/>
            <person name="Hauser L."/>
            <person name="Kyrpides N."/>
            <person name="Lykidis A."/>
            <person name="Ramette A."/>
            <person name="Konstantinidis K."/>
            <person name="Tiedje J."/>
            <person name="Richardson P."/>
        </authorList>
    </citation>
    <scope>NUCLEOTIDE SEQUENCE [LARGE SCALE GENOMIC DNA]</scope>
    <source>
        <strain>MC40-6</strain>
    </source>
</reference>
<organism>
    <name type="scientific">Burkholderia ambifaria (strain MC40-6)</name>
    <dbReference type="NCBI Taxonomy" id="398577"/>
    <lineage>
        <taxon>Bacteria</taxon>
        <taxon>Pseudomonadati</taxon>
        <taxon>Pseudomonadota</taxon>
        <taxon>Betaproteobacteria</taxon>
        <taxon>Burkholderiales</taxon>
        <taxon>Burkholderiaceae</taxon>
        <taxon>Burkholderia</taxon>
        <taxon>Burkholderia cepacia complex</taxon>
    </lineage>
</organism>
<protein>
    <recommendedName>
        <fullName evidence="2">Putative hydrolase BamMC406_5393</fullName>
        <ecNumber>3.-.-.-</ecNumber>
    </recommendedName>
</protein>
<evidence type="ECO:0000250" key="1">
    <source>
        <dbReference type="UniProtKB" id="Q6P587"/>
    </source>
</evidence>
<evidence type="ECO:0000305" key="2"/>
<accession>B1Z1Y2</accession>